<evidence type="ECO:0000255" key="1">
    <source>
        <dbReference type="HAMAP-Rule" id="MF_00360"/>
    </source>
</evidence>
<evidence type="ECO:0000256" key="2">
    <source>
        <dbReference type="SAM" id="MobiDB-lite"/>
    </source>
</evidence>
<evidence type="ECO:0000305" key="3"/>
<accession>B3PN60</accession>
<reference key="1">
    <citation type="journal article" date="2008" name="Infect. Immun.">
        <title>Genome of Mycoplasma arthritidis.</title>
        <authorList>
            <person name="Dybvig K."/>
            <person name="Zuhua C."/>
            <person name="Lao P."/>
            <person name="Jordan D.S."/>
            <person name="French C.T."/>
            <person name="Tu A.H."/>
            <person name="Loraine A.E."/>
        </authorList>
    </citation>
    <scope>NUCLEOTIDE SEQUENCE [LARGE SCALE GENOMIC DNA]</scope>
    <source>
        <strain>158L3-1</strain>
    </source>
</reference>
<organism>
    <name type="scientific">Metamycoplasma arthritidis (strain 158L3-1)</name>
    <name type="common">Mycoplasma arthritidis</name>
    <dbReference type="NCBI Taxonomy" id="243272"/>
    <lineage>
        <taxon>Bacteria</taxon>
        <taxon>Bacillati</taxon>
        <taxon>Mycoplasmatota</taxon>
        <taxon>Mycoplasmoidales</taxon>
        <taxon>Metamycoplasmataceae</taxon>
        <taxon>Metamycoplasma</taxon>
    </lineage>
</organism>
<feature type="chain" id="PRO_1000120776" description="Small ribosomal subunit protein bS6">
    <location>
        <begin position="1"/>
        <end position="160"/>
    </location>
</feature>
<feature type="region of interest" description="Disordered" evidence="2">
    <location>
        <begin position="96"/>
        <end position="160"/>
    </location>
</feature>
<feature type="compositionally biased region" description="Low complexity" evidence="2">
    <location>
        <begin position="126"/>
        <end position="145"/>
    </location>
</feature>
<feature type="compositionally biased region" description="Basic residues" evidence="2">
    <location>
        <begin position="151"/>
        <end position="160"/>
    </location>
</feature>
<dbReference type="EMBL" id="CP001047">
    <property type="protein sequence ID" value="ACF07462.1"/>
    <property type="molecule type" value="Genomic_DNA"/>
</dbReference>
<dbReference type="RefSeq" id="WP_012498419.1">
    <property type="nucleotide sequence ID" value="NC_011025.1"/>
</dbReference>
<dbReference type="SMR" id="B3PN60"/>
<dbReference type="STRING" id="243272.MARTH_orf696"/>
<dbReference type="KEGG" id="mat:MARTH_orf696"/>
<dbReference type="eggNOG" id="COG0360">
    <property type="taxonomic scope" value="Bacteria"/>
</dbReference>
<dbReference type="HOGENOM" id="CLU_137913_0_0_14"/>
<dbReference type="Proteomes" id="UP000008812">
    <property type="component" value="Chromosome"/>
</dbReference>
<dbReference type="GO" id="GO:1990904">
    <property type="term" value="C:ribonucleoprotein complex"/>
    <property type="evidence" value="ECO:0007669"/>
    <property type="project" value="UniProtKB-KW"/>
</dbReference>
<dbReference type="GO" id="GO:0005840">
    <property type="term" value="C:ribosome"/>
    <property type="evidence" value="ECO:0007669"/>
    <property type="project" value="UniProtKB-KW"/>
</dbReference>
<dbReference type="GO" id="GO:0019843">
    <property type="term" value="F:rRNA binding"/>
    <property type="evidence" value="ECO:0007669"/>
    <property type="project" value="UniProtKB-UniRule"/>
</dbReference>
<dbReference type="GO" id="GO:0003735">
    <property type="term" value="F:structural constituent of ribosome"/>
    <property type="evidence" value="ECO:0007669"/>
    <property type="project" value="InterPro"/>
</dbReference>
<dbReference type="GO" id="GO:0006412">
    <property type="term" value="P:translation"/>
    <property type="evidence" value="ECO:0007669"/>
    <property type="project" value="UniProtKB-UniRule"/>
</dbReference>
<dbReference type="CDD" id="cd00473">
    <property type="entry name" value="bS6"/>
    <property type="match status" value="1"/>
</dbReference>
<dbReference type="Gene3D" id="3.30.70.60">
    <property type="match status" value="1"/>
</dbReference>
<dbReference type="HAMAP" id="MF_00360">
    <property type="entry name" value="Ribosomal_bS6"/>
    <property type="match status" value="1"/>
</dbReference>
<dbReference type="InterPro" id="IPR000529">
    <property type="entry name" value="Ribosomal_bS6"/>
</dbReference>
<dbReference type="InterPro" id="IPR035980">
    <property type="entry name" value="Ribosomal_bS6_sf"/>
</dbReference>
<dbReference type="InterPro" id="IPR020814">
    <property type="entry name" value="Ribosomal_S6_plastid/chlpt"/>
</dbReference>
<dbReference type="InterPro" id="IPR014717">
    <property type="entry name" value="Transl_elong_EF1B/ribsomal_bS6"/>
</dbReference>
<dbReference type="NCBIfam" id="TIGR00166">
    <property type="entry name" value="S6"/>
    <property type="match status" value="1"/>
</dbReference>
<dbReference type="Pfam" id="PF01250">
    <property type="entry name" value="Ribosomal_S6"/>
    <property type="match status" value="1"/>
</dbReference>
<dbReference type="SUPFAM" id="SSF54995">
    <property type="entry name" value="Ribosomal protein S6"/>
    <property type="match status" value="1"/>
</dbReference>
<comment type="function">
    <text evidence="1">Binds together with bS18 to 16S ribosomal RNA.</text>
</comment>
<comment type="similarity">
    <text evidence="1">Belongs to the bacterial ribosomal protein bS6 family.</text>
</comment>
<proteinExistence type="inferred from homology"/>
<name>RS6_META1</name>
<protein>
    <recommendedName>
        <fullName evidence="1">Small ribosomal subunit protein bS6</fullName>
    </recommendedName>
    <alternativeName>
        <fullName evidence="3">30S ribosomal protein S6</fullName>
    </alternativeName>
</protein>
<sequence length="160" mass="18384">MSNYEIMILANPDSTLEQVSELLFSVLKKSDTKIEKLERSELAYPIHKLTRATYYLVTVKSDPQLMAELTRKLNIAKFILRSLIINLDSEKGLKPRKVKRFIPRAKNNDRSANQGDRRPFIRRNQTTDASKTEASTEATASKQSEQTTTKPRTRKVSKEQ</sequence>
<gene>
    <name evidence="1" type="primary">rpsF</name>
    <name type="ordered locus">MARTH_orf696</name>
</gene>
<keyword id="KW-1185">Reference proteome</keyword>
<keyword id="KW-0687">Ribonucleoprotein</keyword>
<keyword id="KW-0689">Ribosomal protein</keyword>
<keyword id="KW-0694">RNA-binding</keyword>
<keyword id="KW-0699">rRNA-binding</keyword>